<organism>
    <name type="scientific">Psychrobacter arcticus (strain DSM 17307 / VKM B-2377 / 273-4)</name>
    <dbReference type="NCBI Taxonomy" id="259536"/>
    <lineage>
        <taxon>Bacteria</taxon>
        <taxon>Pseudomonadati</taxon>
        <taxon>Pseudomonadota</taxon>
        <taxon>Gammaproteobacteria</taxon>
        <taxon>Moraxellales</taxon>
        <taxon>Moraxellaceae</taxon>
        <taxon>Psychrobacter</taxon>
    </lineage>
</organism>
<reference key="1">
    <citation type="journal article" date="2010" name="Appl. Environ. Microbiol.">
        <title>The genome sequence of Psychrobacter arcticus 273-4, a psychroactive Siberian permafrost bacterium, reveals mechanisms for adaptation to low-temperature growth.</title>
        <authorList>
            <person name="Ayala-del-Rio H.L."/>
            <person name="Chain P.S."/>
            <person name="Grzymski J.J."/>
            <person name="Ponder M.A."/>
            <person name="Ivanova N."/>
            <person name="Bergholz P.W."/>
            <person name="Di Bartolo G."/>
            <person name="Hauser L."/>
            <person name="Land M."/>
            <person name="Bakermans C."/>
            <person name="Rodrigues D."/>
            <person name="Klappenbach J."/>
            <person name="Zarka D."/>
            <person name="Larimer F."/>
            <person name="Richardson P."/>
            <person name="Murray A."/>
            <person name="Thomashow M."/>
            <person name="Tiedje J.M."/>
        </authorList>
    </citation>
    <scope>NUCLEOTIDE SEQUENCE [LARGE SCALE GENOMIC DNA]</scope>
    <source>
        <strain>DSM 17307 / VKM B-2377 / 273-4</strain>
    </source>
</reference>
<comment type="function">
    <text evidence="1">Catalyzes the pyruvoyl-dependent decarboxylation of aspartate to produce beta-alanine.</text>
</comment>
<comment type="catalytic activity">
    <reaction evidence="1">
        <text>L-aspartate + H(+) = beta-alanine + CO2</text>
        <dbReference type="Rhea" id="RHEA:19497"/>
        <dbReference type="ChEBI" id="CHEBI:15378"/>
        <dbReference type="ChEBI" id="CHEBI:16526"/>
        <dbReference type="ChEBI" id="CHEBI:29991"/>
        <dbReference type="ChEBI" id="CHEBI:57966"/>
        <dbReference type="EC" id="4.1.1.11"/>
    </reaction>
</comment>
<comment type="cofactor">
    <cofactor evidence="1">
        <name>pyruvate</name>
        <dbReference type="ChEBI" id="CHEBI:15361"/>
    </cofactor>
    <text evidence="1">Binds 1 pyruvoyl group covalently per subunit.</text>
</comment>
<comment type="pathway">
    <text evidence="1">Cofactor biosynthesis; (R)-pantothenate biosynthesis; beta-alanine from L-aspartate: step 1/1.</text>
</comment>
<comment type="subunit">
    <text evidence="1">Heterooctamer of four alpha and four beta subunits.</text>
</comment>
<comment type="subcellular location">
    <subcellularLocation>
        <location evidence="1">Cytoplasm</location>
    </subcellularLocation>
</comment>
<comment type="PTM">
    <text evidence="1">Is synthesized initially as an inactive proenzyme, which is activated by self-cleavage at a specific serine bond to produce a beta-subunit with a hydroxyl group at its C-terminus and an alpha-subunit with a pyruvoyl group at its N-terminus.</text>
</comment>
<comment type="similarity">
    <text evidence="1">Belongs to the PanD family.</text>
</comment>
<accession>Q4FVB6</accession>
<name>PAND_PSYA2</name>
<gene>
    <name evidence="1" type="primary">panD</name>
    <name type="ordered locus">Psyc_0169</name>
</gene>
<dbReference type="EC" id="4.1.1.11" evidence="1"/>
<dbReference type="EMBL" id="CP000082">
    <property type="protein sequence ID" value="AAZ18042.1"/>
    <property type="molecule type" value="Genomic_DNA"/>
</dbReference>
<dbReference type="RefSeq" id="WP_011279481.1">
    <property type="nucleotide sequence ID" value="NC_007204.1"/>
</dbReference>
<dbReference type="SMR" id="Q4FVB6"/>
<dbReference type="STRING" id="259536.Psyc_0169"/>
<dbReference type="KEGG" id="par:Psyc_0169"/>
<dbReference type="eggNOG" id="COG0853">
    <property type="taxonomic scope" value="Bacteria"/>
</dbReference>
<dbReference type="HOGENOM" id="CLU_115305_2_1_6"/>
<dbReference type="OrthoDB" id="9803983at2"/>
<dbReference type="UniPathway" id="UPA00028">
    <property type="reaction ID" value="UER00002"/>
</dbReference>
<dbReference type="Proteomes" id="UP000000546">
    <property type="component" value="Chromosome"/>
</dbReference>
<dbReference type="GO" id="GO:0005829">
    <property type="term" value="C:cytosol"/>
    <property type="evidence" value="ECO:0007669"/>
    <property type="project" value="TreeGrafter"/>
</dbReference>
<dbReference type="GO" id="GO:0004068">
    <property type="term" value="F:aspartate 1-decarboxylase activity"/>
    <property type="evidence" value="ECO:0007669"/>
    <property type="project" value="UniProtKB-UniRule"/>
</dbReference>
<dbReference type="GO" id="GO:0006523">
    <property type="term" value="P:alanine biosynthetic process"/>
    <property type="evidence" value="ECO:0007669"/>
    <property type="project" value="InterPro"/>
</dbReference>
<dbReference type="GO" id="GO:0015940">
    <property type="term" value="P:pantothenate biosynthetic process"/>
    <property type="evidence" value="ECO:0007669"/>
    <property type="project" value="UniProtKB-UniRule"/>
</dbReference>
<dbReference type="CDD" id="cd06919">
    <property type="entry name" value="Asp_decarbox"/>
    <property type="match status" value="1"/>
</dbReference>
<dbReference type="Gene3D" id="2.40.40.20">
    <property type="match status" value="1"/>
</dbReference>
<dbReference type="HAMAP" id="MF_00446">
    <property type="entry name" value="PanD"/>
    <property type="match status" value="1"/>
</dbReference>
<dbReference type="InterPro" id="IPR009010">
    <property type="entry name" value="Asp_de-COase-like_dom_sf"/>
</dbReference>
<dbReference type="InterPro" id="IPR003190">
    <property type="entry name" value="Asp_decarbox"/>
</dbReference>
<dbReference type="NCBIfam" id="TIGR00223">
    <property type="entry name" value="panD"/>
    <property type="match status" value="1"/>
</dbReference>
<dbReference type="PANTHER" id="PTHR21012">
    <property type="entry name" value="ASPARTATE 1-DECARBOXYLASE"/>
    <property type="match status" value="1"/>
</dbReference>
<dbReference type="PANTHER" id="PTHR21012:SF0">
    <property type="entry name" value="ASPARTATE 1-DECARBOXYLASE"/>
    <property type="match status" value="1"/>
</dbReference>
<dbReference type="Pfam" id="PF02261">
    <property type="entry name" value="Asp_decarbox"/>
    <property type="match status" value="1"/>
</dbReference>
<dbReference type="PIRSF" id="PIRSF006246">
    <property type="entry name" value="Asp_decarbox"/>
    <property type="match status" value="1"/>
</dbReference>
<dbReference type="SUPFAM" id="SSF50692">
    <property type="entry name" value="ADC-like"/>
    <property type="match status" value="1"/>
</dbReference>
<feature type="chain" id="PRO_0000236883" description="Aspartate 1-decarboxylase beta chain" evidence="1">
    <location>
        <begin position="1"/>
        <end position="24"/>
    </location>
</feature>
<feature type="chain" id="PRO_0000236884" description="Aspartate 1-decarboxylase alpha chain" evidence="1">
    <location>
        <begin position="25"/>
        <end position="126"/>
    </location>
</feature>
<feature type="active site" description="Schiff-base intermediate with substrate; via pyruvic acid" evidence="1">
    <location>
        <position position="25"/>
    </location>
</feature>
<feature type="active site" description="Proton donor" evidence="1">
    <location>
        <position position="58"/>
    </location>
</feature>
<feature type="binding site" evidence="1">
    <location>
        <position position="57"/>
    </location>
    <ligand>
        <name>substrate</name>
    </ligand>
</feature>
<feature type="binding site" evidence="1">
    <location>
        <begin position="73"/>
        <end position="75"/>
    </location>
    <ligand>
        <name>substrate</name>
    </ligand>
</feature>
<feature type="modified residue" description="Pyruvic acid (Ser)" evidence="1">
    <location>
        <position position="25"/>
    </location>
</feature>
<evidence type="ECO:0000255" key="1">
    <source>
        <dbReference type="HAMAP-Rule" id="MF_00446"/>
    </source>
</evidence>
<proteinExistence type="inferred from homology"/>
<keyword id="KW-0068">Autocatalytic cleavage</keyword>
<keyword id="KW-0963">Cytoplasm</keyword>
<keyword id="KW-0210">Decarboxylase</keyword>
<keyword id="KW-0456">Lyase</keyword>
<keyword id="KW-0566">Pantothenate biosynthesis</keyword>
<keyword id="KW-0670">Pyruvate</keyword>
<keyword id="KW-1185">Reference proteome</keyword>
<keyword id="KW-0704">Schiff base</keyword>
<keyword id="KW-0865">Zymogen</keyword>
<protein>
    <recommendedName>
        <fullName evidence="1">Aspartate 1-decarboxylase</fullName>
        <ecNumber evidence="1">4.1.1.11</ecNumber>
    </recommendedName>
    <alternativeName>
        <fullName evidence="1">Aspartate alpha-decarboxylase</fullName>
    </alternativeName>
    <component>
        <recommendedName>
            <fullName evidence="1">Aspartate 1-decarboxylase beta chain</fullName>
        </recommendedName>
    </component>
    <component>
        <recommendedName>
            <fullName evidence="1">Aspartate 1-decarboxylase alpha chain</fullName>
        </recommendedName>
    </component>
</protein>
<sequence length="126" mass="13839">MLLNMLKCKLHRARVTHAELHYEGSCGIDGDLLDLAGLRENESIDIYNVTNGKRFRTYAIRAEAGSGIISLNGAAAHMADLGDIVIICAYAHFDEVEASTYQPRLVYCNEDNTVKDTANIIPVQVA</sequence>